<reference key="1">
    <citation type="journal article" date="2009" name="Infect. Immun.">
        <title>Comparative genomics reveal extensive transposon-mediated genomic plasticity and diversity among potential effector proteins within the genus Coxiella.</title>
        <authorList>
            <person name="Beare P.A."/>
            <person name="Unsworth N."/>
            <person name="Andoh M."/>
            <person name="Voth D.E."/>
            <person name="Omsland A."/>
            <person name="Gilk S.D."/>
            <person name="Williams K.P."/>
            <person name="Sobral B.W."/>
            <person name="Kupko J.J. III"/>
            <person name="Porcella S.F."/>
            <person name="Samuel J.E."/>
            <person name="Heinzen R.A."/>
        </authorList>
    </citation>
    <scope>NUCLEOTIDE SEQUENCE [LARGE SCALE GENOMIC DNA]</scope>
    <source>
        <strain>Dugway 5J108-111</strain>
    </source>
</reference>
<accession>A9KGS7</accession>
<gene>
    <name evidence="1" type="primary">rpmB</name>
    <name type="ordered locus">CBUD_1790</name>
</gene>
<proteinExistence type="inferred from homology"/>
<sequence>MAKVCQVTGKRPQSGNNVSHANKKTNRRFLPNLKKRRFWLPDEKRFITLTVSTHGMRIIDKLGINAVLKKIREREKESK</sequence>
<organism>
    <name type="scientific">Coxiella burnetii (strain Dugway 5J108-111)</name>
    <dbReference type="NCBI Taxonomy" id="434922"/>
    <lineage>
        <taxon>Bacteria</taxon>
        <taxon>Pseudomonadati</taxon>
        <taxon>Pseudomonadota</taxon>
        <taxon>Gammaproteobacteria</taxon>
        <taxon>Legionellales</taxon>
        <taxon>Coxiellaceae</taxon>
        <taxon>Coxiella</taxon>
    </lineage>
</organism>
<name>RL28_COXBN</name>
<protein>
    <recommendedName>
        <fullName evidence="1">Large ribosomal subunit protein bL28</fullName>
    </recommendedName>
    <alternativeName>
        <fullName evidence="3">50S ribosomal protein L28</fullName>
    </alternativeName>
</protein>
<keyword id="KW-0687">Ribonucleoprotein</keyword>
<keyword id="KW-0689">Ribosomal protein</keyword>
<evidence type="ECO:0000255" key="1">
    <source>
        <dbReference type="HAMAP-Rule" id="MF_00373"/>
    </source>
</evidence>
<evidence type="ECO:0000256" key="2">
    <source>
        <dbReference type="SAM" id="MobiDB-lite"/>
    </source>
</evidence>
<evidence type="ECO:0000305" key="3"/>
<dbReference type="EMBL" id="CP000733">
    <property type="protein sequence ID" value="ABS78361.1"/>
    <property type="molecule type" value="Genomic_DNA"/>
</dbReference>
<dbReference type="RefSeq" id="WP_005771445.1">
    <property type="nucleotide sequence ID" value="NC_009727.1"/>
</dbReference>
<dbReference type="SMR" id="A9KGS7"/>
<dbReference type="KEGG" id="cbd:CBUD_1790"/>
<dbReference type="HOGENOM" id="CLU_064548_3_1_6"/>
<dbReference type="Proteomes" id="UP000008555">
    <property type="component" value="Chromosome"/>
</dbReference>
<dbReference type="GO" id="GO:0022625">
    <property type="term" value="C:cytosolic large ribosomal subunit"/>
    <property type="evidence" value="ECO:0007669"/>
    <property type="project" value="TreeGrafter"/>
</dbReference>
<dbReference type="GO" id="GO:0003735">
    <property type="term" value="F:structural constituent of ribosome"/>
    <property type="evidence" value="ECO:0007669"/>
    <property type="project" value="InterPro"/>
</dbReference>
<dbReference type="GO" id="GO:0006412">
    <property type="term" value="P:translation"/>
    <property type="evidence" value="ECO:0007669"/>
    <property type="project" value="UniProtKB-UniRule"/>
</dbReference>
<dbReference type="FunFam" id="2.30.170.40:FF:000001">
    <property type="entry name" value="50S ribosomal protein L28"/>
    <property type="match status" value="1"/>
</dbReference>
<dbReference type="Gene3D" id="2.30.170.40">
    <property type="entry name" value="Ribosomal protein L28/L24"/>
    <property type="match status" value="1"/>
</dbReference>
<dbReference type="HAMAP" id="MF_00373">
    <property type="entry name" value="Ribosomal_bL28"/>
    <property type="match status" value="1"/>
</dbReference>
<dbReference type="InterPro" id="IPR026569">
    <property type="entry name" value="Ribosomal_bL28"/>
</dbReference>
<dbReference type="InterPro" id="IPR034704">
    <property type="entry name" value="Ribosomal_bL28/bL31-like_sf"/>
</dbReference>
<dbReference type="InterPro" id="IPR001383">
    <property type="entry name" value="Ribosomal_bL28_bact-type"/>
</dbReference>
<dbReference type="InterPro" id="IPR037147">
    <property type="entry name" value="Ribosomal_bL28_sf"/>
</dbReference>
<dbReference type="NCBIfam" id="TIGR00009">
    <property type="entry name" value="L28"/>
    <property type="match status" value="1"/>
</dbReference>
<dbReference type="PANTHER" id="PTHR13528">
    <property type="entry name" value="39S RIBOSOMAL PROTEIN L28, MITOCHONDRIAL"/>
    <property type="match status" value="1"/>
</dbReference>
<dbReference type="PANTHER" id="PTHR13528:SF2">
    <property type="entry name" value="LARGE RIBOSOMAL SUBUNIT PROTEIN BL28M"/>
    <property type="match status" value="1"/>
</dbReference>
<dbReference type="Pfam" id="PF00830">
    <property type="entry name" value="Ribosomal_L28"/>
    <property type="match status" value="1"/>
</dbReference>
<dbReference type="SUPFAM" id="SSF143800">
    <property type="entry name" value="L28p-like"/>
    <property type="match status" value="1"/>
</dbReference>
<feature type="chain" id="PRO_1000079845" description="Large ribosomal subunit protein bL28">
    <location>
        <begin position="1"/>
        <end position="79"/>
    </location>
</feature>
<feature type="region of interest" description="Disordered" evidence="2">
    <location>
        <begin position="1"/>
        <end position="26"/>
    </location>
</feature>
<feature type="compositionally biased region" description="Polar residues" evidence="2">
    <location>
        <begin position="11"/>
        <end position="20"/>
    </location>
</feature>
<comment type="similarity">
    <text evidence="1">Belongs to the bacterial ribosomal protein bL28 family.</text>
</comment>